<reference key="1">
    <citation type="journal article" date="1990" name="Gene">
        <title>Nucleotide sequence of Streptomyces fradiae transposable element Tn4556: a class-II transposon related to Tn3.</title>
        <authorList>
            <person name="Siemieniak D.R."/>
            <person name="Slightom J.L."/>
            <person name="Chung S.T."/>
        </authorList>
    </citation>
    <scope>NUCLEOTIDE SEQUENCE [GENOMIC DNA]</scope>
    <source>
        <transposon>Tn4556</transposon>
    </source>
</reference>
<name>YT37_STRFR</name>
<organism>
    <name type="scientific">Streptomyces fradiae</name>
    <name type="common">Streptomyces roseoflavus</name>
    <dbReference type="NCBI Taxonomy" id="1906"/>
    <lineage>
        <taxon>Bacteria</taxon>
        <taxon>Bacillati</taxon>
        <taxon>Actinomycetota</taxon>
        <taxon>Actinomycetes</taxon>
        <taxon>Kitasatosporales</taxon>
        <taxon>Streptomycetaceae</taxon>
        <taxon>Streptomyces</taxon>
    </lineage>
</organism>
<keyword id="KW-0489">Methyltransferase</keyword>
<keyword id="KW-0808">Transferase</keyword>
<keyword id="KW-0814">Transposable element</keyword>
<dbReference type="EMBL" id="M29297">
    <property type="protein sequence ID" value="AAA88564.1"/>
    <property type="molecule type" value="Genomic_DNA"/>
</dbReference>
<dbReference type="PIR" id="JQ0429">
    <property type="entry name" value="JQ0429"/>
</dbReference>
<dbReference type="SMR" id="P20187"/>
<dbReference type="GO" id="GO:0008168">
    <property type="term" value="F:methyltransferase activity"/>
    <property type="evidence" value="ECO:0007669"/>
    <property type="project" value="UniProtKB-KW"/>
</dbReference>
<dbReference type="GO" id="GO:0032259">
    <property type="term" value="P:methylation"/>
    <property type="evidence" value="ECO:0007669"/>
    <property type="project" value="UniProtKB-KW"/>
</dbReference>
<dbReference type="CDD" id="cd02440">
    <property type="entry name" value="AdoMet_MTases"/>
    <property type="match status" value="1"/>
</dbReference>
<dbReference type="Gene3D" id="3.40.50.150">
    <property type="entry name" value="Vaccinia Virus protein VP39"/>
    <property type="match status" value="1"/>
</dbReference>
<dbReference type="Gene3D" id="1.10.10.10">
    <property type="entry name" value="Winged helix-like DNA-binding domain superfamily/Winged helix DNA-binding domain"/>
    <property type="match status" value="1"/>
</dbReference>
<dbReference type="InterPro" id="IPR025714">
    <property type="entry name" value="Methyltranfer_dom"/>
</dbReference>
<dbReference type="InterPro" id="IPR050508">
    <property type="entry name" value="Methyltransf_Superfamily"/>
</dbReference>
<dbReference type="InterPro" id="IPR029063">
    <property type="entry name" value="SAM-dependent_MTases_sf"/>
</dbReference>
<dbReference type="InterPro" id="IPR005149">
    <property type="entry name" value="Tscrpt_reg_PadR_N"/>
</dbReference>
<dbReference type="InterPro" id="IPR036388">
    <property type="entry name" value="WH-like_DNA-bd_sf"/>
</dbReference>
<dbReference type="InterPro" id="IPR036390">
    <property type="entry name" value="WH_DNA-bd_sf"/>
</dbReference>
<dbReference type="PANTHER" id="PTHR42912">
    <property type="entry name" value="METHYLTRANSFERASE"/>
    <property type="match status" value="1"/>
</dbReference>
<dbReference type="Pfam" id="PF13847">
    <property type="entry name" value="Methyltransf_31"/>
    <property type="match status" value="1"/>
</dbReference>
<dbReference type="Pfam" id="PF03551">
    <property type="entry name" value="PadR"/>
    <property type="match status" value="1"/>
</dbReference>
<dbReference type="SUPFAM" id="SSF53335">
    <property type="entry name" value="S-adenosyl-L-methionine-dependent methyltransferases"/>
    <property type="match status" value="1"/>
</dbReference>
<dbReference type="SUPFAM" id="SSF46785">
    <property type="entry name" value="Winged helix' DNA-binding domain"/>
    <property type="match status" value="1"/>
</dbReference>
<sequence length="345" mass="37113">MRTNDAQMLVLCALADGPLHGYAINAAIEQVSGHRLGPGSLYGALARLEAKQLVRPLEEKGRQRPFCLTPAGRELLEREAHSMARLSGRVFESAVPDEVSYLDQLATTDAARSYKSVMLDALDARPGESALDLGCGPGTDLGTLAKAVSPSGRVIGIDSSQEMVEQARRRTENLPAVEVELGDIHTLPLEDGSIDCARTDRVLQHVADPAQALAEARRVLRPGGRLVMGEPDWDSLTIDYPDLEVSRAYTRHVTDKIVRNGVIGRQLARLALDAGFAVPTVVPITSVFRDAQAADQVLGLQRNTERAVSAGYLPALASQRWLDHLAAGPFFAAVTLYVVVAQATP</sequence>
<feature type="chain" id="PRO_0000204445" description="Uncharacterized 37.1 kDa protein in transposon TN4556">
    <location>
        <begin position="1"/>
        <end position="345"/>
    </location>
</feature>
<accession>P20187</accession>
<protein>
    <recommendedName>
        <fullName>Uncharacterized 37.1 kDa protein in transposon TN4556</fullName>
    </recommendedName>
</protein>
<proteinExistence type="inferred from homology"/>
<evidence type="ECO:0000305" key="1"/>
<comment type="similarity">
    <text evidence="1">Belongs to the methyltransferase superfamily.</text>
</comment>